<keyword id="KW-0749">Sporulation</keyword>
<evidence type="ECO:0000255" key="1">
    <source>
        <dbReference type="HAMAP-Rule" id="MF_01504"/>
    </source>
</evidence>
<evidence type="ECO:0000256" key="2">
    <source>
        <dbReference type="SAM" id="MobiDB-lite"/>
    </source>
</evidence>
<feature type="chain" id="PRO_1000185025" description="Small, acid-soluble spore protein K">
    <location>
        <begin position="1"/>
        <end position="52"/>
    </location>
</feature>
<feature type="region of interest" description="Disordered" evidence="2">
    <location>
        <begin position="1"/>
        <end position="52"/>
    </location>
</feature>
<sequence length="52" mass="5946">MGKQAEFWSESKNNSKIDGQPKAKSRFASKRPNGTINTHPQERMRAANQQEE</sequence>
<accession>B9J2V0</accession>
<gene>
    <name evidence="1" type="primary">sspK</name>
    <name type="ordered locus">BCQ_0547</name>
</gene>
<organism>
    <name type="scientific">Bacillus cereus (strain Q1)</name>
    <dbReference type="NCBI Taxonomy" id="361100"/>
    <lineage>
        <taxon>Bacteria</taxon>
        <taxon>Bacillati</taxon>
        <taxon>Bacillota</taxon>
        <taxon>Bacilli</taxon>
        <taxon>Bacillales</taxon>
        <taxon>Bacillaceae</taxon>
        <taxon>Bacillus</taxon>
        <taxon>Bacillus cereus group</taxon>
    </lineage>
</organism>
<name>SSPK_BACCQ</name>
<proteinExistence type="inferred from homology"/>
<dbReference type="EMBL" id="CP000227">
    <property type="protein sequence ID" value="ACM11019.1"/>
    <property type="molecule type" value="Genomic_DNA"/>
</dbReference>
<dbReference type="KEGG" id="bcq:BCQ_0547"/>
<dbReference type="HOGENOM" id="CLU_3076423_0_0_9"/>
<dbReference type="Proteomes" id="UP000000441">
    <property type="component" value="Chromosome"/>
</dbReference>
<dbReference type="GO" id="GO:0042601">
    <property type="term" value="C:endospore-forming forespore"/>
    <property type="evidence" value="ECO:0007669"/>
    <property type="project" value="InterPro"/>
</dbReference>
<dbReference type="GO" id="GO:0030436">
    <property type="term" value="P:asexual sporulation"/>
    <property type="evidence" value="ECO:0007669"/>
    <property type="project" value="UniProtKB-UniRule"/>
</dbReference>
<dbReference type="GO" id="GO:0030435">
    <property type="term" value="P:sporulation resulting in formation of a cellular spore"/>
    <property type="evidence" value="ECO:0007669"/>
    <property type="project" value="UniProtKB-KW"/>
</dbReference>
<dbReference type="HAMAP" id="MF_01504">
    <property type="entry name" value="SspK"/>
    <property type="match status" value="1"/>
</dbReference>
<dbReference type="InterPro" id="IPR012611">
    <property type="entry name" value="SASP_SspK"/>
</dbReference>
<dbReference type="NCBIfam" id="NF002843">
    <property type="entry name" value="PRK03081.1"/>
    <property type="match status" value="1"/>
</dbReference>
<dbReference type="NCBIfam" id="TIGR03091">
    <property type="entry name" value="SASP_sspK"/>
    <property type="match status" value="1"/>
</dbReference>
<dbReference type="Pfam" id="PF08176">
    <property type="entry name" value="SspK"/>
    <property type="match status" value="1"/>
</dbReference>
<reference key="1">
    <citation type="journal article" date="2009" name="J. Bacteriol.">
        <title>Complete genome sequence of the extremophilic Bacillus cereus strain Q1 with industrial applications.</title>
        <authorList>
            <person name="Xiong Z."/>
            <person name="Jiang Y."/>
            <person name="Qi D."/>
            <person name="Lu H."/>
            <person name="Yang F."/>
            <person name="Yang J."/>
            <person name="Chen L."/>
            <person name="Sun L."/>
            <person name="Xu X."/>
            <person name="Xue Y."/>
            <person name="Zhu Y."/>
            <person name="Jin Q."/>
        </authorList>
    </citation>
    <scope>NUCLEOTIDE SEQUENCE [LARGE SCALE GENOMIC DNA]</scope>
    <source>
        <strain>Q1</strain>
    </source>
</reference>
<comment type="subcellular location">
    <subcellularLocation>
        <location evidence="1">Spore core</location>
    </subcellularLocation>
</comment>
<comment type="induction">
    <text evidence="1">Expressed only in the forespore compartment of sporulating cells.</text>
</comment>
<comment type="similarity">
    <text evidence="1">Belongs to the SspK family.</text>
</comment>
<protein>
    <recommendedName>
        <fullName evidence="1">Small, acid-soluble spore protein K</fullName>
        <shortName evidence="1">SASP K</shortName>
    </recommendedName>
</protein>